<reference key="1">
    <citation type="journal article" date="2007" name="Toxicon">
        <title>Cytolytic peptides belonging to the brevinin-1 and brevinin-2 families isolated from the skin of the Japanese brown frog, Rana dybowskii.</title>
        <authorList>
            <person name="Conlon J.M."/>
            <person name="Kolodziejek J."/>
            <person name="Nowotny N."/>
            <person name="Leprince J."/>
            <person name="Vaudry H."/>
            <person name="Coquet L."/>
            <person name="Jouenne T."/>
            <person name="Iwamuro S."/>
        </authorList>
    </citation>
    <scope>PROTEIN SEQUENCE</scope>
    <scope>AMIDATION AT GLY-14</scope>
    <scope>FUNCTION</scope>
    <scope>MASS SPECTROMETRY</scope>
    <source>
        <tissue>Skin secretion</tissue>
    </source>
</reference>
<organism>
    <name type="scientific">Rana dybowskii</name>
    <name type="common">Dybovsky's frog</name>
    <name type="synonym">Korean brown frog</name>
    <dbReference type="NCBI Taxonomy" id="71582"/>
    <lineage>
        <taxon>Eukaryota</taxon>
        <taxon>Metazoa</taxon>
        <taxon>Chordata</taxon>
        <taxon>Craniata</taxon>
        <taxon>Vertebrata</taxon>
        <taxon>Euteleostomi</taxon>
        <taxon>Amphibia</taxon>
        <taxon>Batrachia</taxon>
        <taxon>Anura</taxon>
        <taxon>Neobatrachia</taxon>
        <taxon>Ranoidea</taxon>
        <taxon>Ranidae</taxon>
        <taxon>Rana</taxon>
        <taxon>Rana</taxon>
    </lineage>
</organism>
<dbReference type="GO" id="GO:0005576">
    <property type="term" value="C:extracellular region"/>
    <property type="evidence" value="ECO:0007669"/>
    <property type="project" value="UniProtKB-SubCell"/>
</dbReference>
<dbReference type="GO" id="GO:0042742">
    <property type="term" value="P:defense response to bacterium"/>
    <property type="evidence" value="ECO:0007669"/>
    <property type="project" value="UniProtKB-KW"/>
</dbReference>
<feature type="peptide" id="PRO_0000311604" description="Temporin-1DYa">
    <location>
        <begin position="1"/>
        <end position="14"/>
    </location>
</feature>
<feature type="modified residue" description="Glycine amide" evidence="1">
    <location>
        <position position="14"/>
    </location>
</feature>
<accession>P0C5X6</accession>
<protein>
    <recommendedName>
        <fullName>Temporin-1DYa</fullName>
    </recommendedName>
</protein>
<comment type="function">
    <text evidence="1">Antimicrobial peptide. Active against the Gram-positive bacterium S.aureus (MIC&gt;60 uM) and the Gram-negative bacterium E.coli (MIC&gt;60 uM).</text>
</comment>
<comment type="subcellular location">
    <subcellularLocation>
        <location>Secreted</location>
    </subcellularLocation>
</comment>
<comment type="tissue specificity">
    <text>Expressed by the skin glands.</text>
</comment>
<comment type="mass spectrometry" mass="1403.8" method="MALDI" evidence="1"/>
<comment type="similarity">
    <text evidence="2">Belongs to the frog skin active peptide (FSAP) family. Temporin subfamily.</text>
</comment>
<sequence length="14" mass="1406">FIGPIISALASLFG</sequence>
<proteinExistence type="evidence at protein level"/>
<name>TP1A_RANDY</name>
<keyword id="KW-0027">Amidation</keyword>
<keyword id="KW-0878">Amphibian defense peptide</keyword>
<keyword id="KW-0044">Antibiotic</keyword>
<keyword id="KW-0929">Antimicrobial</keyword>
<keyword id="KW-0903">Direct protein sequencing</keyword>
<keyword id="KW-0964">Secreted</keyword>
<evidence type="ECO:0000269" key="1">
    <source>
    </source>
</evidence>
<evidence type="ECO:0000305" key="2"/>